<comment type="function">
    <text evidence="1">Large subunit of the glutamine-dependent carbamoyl phosphate synthetase (CPSase). CPSase catalyzes the formation of carbamoyl phosphate from the ammonia moiety of glutamine, carbonate, and phosphate donated by ATP, constituting the first step of 2 biosynthetic pathways, one leading to arginine and/or urea and the other to pyrimidine nucleotides. The large subunit (synthetase) binds the substrates ammonia (free or transferred from glutamine from the small subunit), hydrogencarbonate and ATP and carries out an ATP-coupled ligase reaction, activating hydrogencarbonate by forming carboxy phosphate which reacts with ammonia to form carbamoyl phosphate.</text>
</comment>
<comment type="catalytic activity">
    <reaction evidence="1">
        <text>hydrogencarbonate + L-glutamine + 2 ATP + H2O = carbamoyl phosphate + L-glutamate + 2 ADP + phosphate + 2 H(+)</text>
        <dbReference type="Rhea" id="RHEA:18633"/>
        <dbReference type="ChEBI" id="CHEBI:15377"/>
        <dbReference type="ChEBI" id="CHEBI:15378"/>
        <dbReference type="ChEBI" id="CHEBI:17544"/>
        <dbReference type="ChEBI" id="CHEBI:29985"/>
        <dbReference type="ChEBI" id="CHEBI:30616"/>
        <dbReference type="ChEBI" id="CHEBI:43474"/>
        <dbReference type="ChEBI" id="CHEBI:58228"/>
        <dbReference type="ChEBI" id="CHEBI:58359"/>
        <dbReference type="ChEBI" id="CHEBI:456216"/>
        <dbReference type="EC" id="6.3.5.5"/>
    </reaction>
</comment>
<comment type="catalytic activity">
    <molecule>Carbamoyl phosphate synthase large chain</molecule>
    <reaction evidence="1">
        <text>hydrogencarbonate + NH4(+) + 2 ATP = carbamoyl phosphate + 2 ADP + phosphate + 2 H(+)</text>
        <dbReference type="Rhea" id="RHEA:18029"/>
        <dbReference type="ChEBI" id="CHEBI:15378"/>
        <dbReference type="ChEBI" id="CHEBI:17544"/>
        <dbReference type="ChEBI" id="CHEBI:28938"/>
        <dbReference type="ChEBI" id="CHEBI:30616"/>
        <dbReference type="ChEBI" id="CHEBI:43474"/>
        <dbReference type="ChEBI" id="CHEBI:58228"/>
        <dbReference type="ChEBI" id="CHEBI:456216"/>
        <dbReference type="EC" id="6.3.4.16"/>
    </reaction>
</comment>
<comment type="cofactor">
    <cofactor evidence="1">
        <name>Mg(2+)</name>
        <dbReference type="ChEBI" id="CHEBI:18420"/>
    </cofactor>
    <cofactor evidence="1">
        <name>Mn(2+)</name>
        <dbReference type="ChEBI" id="CHEBI:29035"/>
    </cofactor>
    <text evidence="1">Binds 4 Mg(2+) or Mn(2+) ions per subunit.</text>
</comment>
<comment type="pathway">
    <text evidence="1">Amino-acid biosynthesis; L-arginine biosynthesis; carbamoyl phosphate from bicarbonate: step 1/1.</text>
</comment>
<comment type="pathway">
    <text evidence="1">Pyrimidine metabolism; UMP biosynthesis via de novo pathway; (S)-dihydroorotate from bicarbonate: step 1/3.</text>
</comment>
<comment type="subunit">
    <text evidence="1">Composed of two chains; the small (or glutamine) chain promotes the hydrolysis of glutamine to ammonia, which is used by the large (or ammonia) chain to synthesize carbamoyl phosphate. Tetramer of heterodimers (alpha,beta)4.</text>
</comment>
<comment type="domain">
    <text evidence="1">The large subunit is composed of 2 ATP-grasp domains that are involved in binding the 2 ATP molecules needed for carbamoyl phosphate synthesis. The N-terminal ATP-grasp domain (referred to as the carboxyphosphate synthetic component) catalyzes the ATP-dependent phosphorylation of hydrogencarbonate to carboxyphosphate and the subsequent nucleophilic attack by ammonia to form a carbamate intermediate. The C-terminal ATP-grasp domain (referred to as the carbamoyl phosphate synthetic component) then catalyzes the phosphorylation of carbamate with the second ATP to form the end product carbamoyl phosphate. The reactive and unstable enzyme intermediates are sequentially channeled from one active site to the next through the interior of the protein over a distance of at least 96 A.</text>
</comment>
<comment type="similarity">
    <text evidence="1">Belongs to the CarB family.</text>
</comment>
<name>CARB_METBF</name>
<feature type="chain" id="PRO_1000066363" description="Carbamoyl phosphate synthase large chain">
    <location>
        <begin position="1"/>
        <end position="1071"/>
    </location>
</feature>
<feature type="domain" description="ATP-grasp 1" evidence="1">
    <location>
        <begin position="133"/>
        <end position="325"/>
    </location>
</feature>
<feature type="domain" description="ATP-grasp 2" evidence="1">
    <location>
        <begin position="673"/>
        <end position="864"/>
    </location>
</feature>
<feature type="domain" description="MGS-like" evidence="1">
    <location>
        <begin position="931"/>
        <end position="1071"/>
    </location>
</feature>
<feature type="region of interest" description="Carboxyphosphate synthetic domain" evidence="1">
    <location>
        <begin position="1"/>
        <end position="399"/>
    </location>
</feature>
<feature type="region of interest" description="Oligomerization domain" evidence="1">
    <location>
        <begin position="400"/>
        <end position="540"/>
    </location>
</feature>
<feature type="region of interest" description="Carbamoyl phosphate synthetic domain" evidence="1">
    <location>
        <begin position="541"/>
        <end position="932"/>
    </location>
</feature>
<feature type="region of interest" description="Allosteric domain" evidence="1">
    <location>
        <begin position="933"/>
        <end position="1071"/>
    </location>
</feature>
<feature type="binding site" evidence="1">
    <location>
        <position position="129"/>
    </location>
    <ligand>
        <name>ATP</name>
        <dbReference type="ChEBI" id="CHEBI:30616"/>
        <label>1</label>
    </ligand>
</feature>
<feature type="binding site" evidence="1">
    <location>
        <position position="169"/>
    </location>
    <ligand>
        <name>ATP</name>
        <dbReference type="ChEBI" id="CHEBI:30616"/>
        <label>1</label>
    </ligand>
</feature>
<feature type="binding site" evidence="1">
    <location>
        <position position="175"/>
    </location>
    <ligand>
        <name>ATP</name>
        <dbReference type="ChEBI" id="CHEBI:30616"/>
        <label>1</label>
    </ligand>
</feature>
<feature type="binding site" evidence="1">
    <location>
        <position position="176"/>
    </location>
    <ligand>
        <name>ATP</name>
        <dbReference type="ChEBI" id="CHEBI:30616"/>
        <label>1</label>
    </ligand>
</feature>
<feature type="binding site" evidence="1">
    <location>
        <position position="208"/>
    </location>
    <ligand>
        <name>ATP</name>
        <dbReference type="ChEBI" id="CHEBI:30616"/>
        <label>1</label>
    </ligand>
</feature>
<feature type="binding site" evidence="1">
    <location>
        <position position="210"/>
    </location>
    <ligand>
        <name>ATP</name>
        <dbReference type="ChEBI" id="CHEBI:30616"/>
        <label>1</label>
    </ligand>
</feature>
<feature type="binding site" evidence="1">
    <location>
        <position position="215"/>
    </location>
    <ligand>
        <name>ATP</name>
        <dbReference type="ChEBI" id="CHEBI:30616"/>
        <label>1</label>
    </ligand>
</feature>
<feature type="binding site" evidence="1">
    <location>
        <position position="241"/>
    </location>
    <ligand>
        <name>ATP</name>
        <dbReference type="ChEBI" id="CHEBI:30616"/>
        <label>1</label>
    </ligand>
</feature>
<feature type="binding site" evidence="1">
    <location>
        <position position="242"/>
    </location>
    <ligand>
        <name>ATP</name>
        <dbReference type="ChEBI" id="CHEBI:30616"/>
        <label>1</label>
    </ligand>
</feature>
<feature type="binding site" evidence="1">
    <location>
        <position position="243"/>
    </location>
    <ligand>
        <name>ATP</name>
        <dbReference type="ChEBI" id="CHEBI:30616"/>
        <label>1</label>
    </ligand>
</feature>
<feature type="binding site" evidence="1">
    <location>
        <position position="284"/>
    </location>
    <ligand>
        <name>ATP</name>
        <dbReference type="ChEBI" id="CHEBI:30616"/>
        <label>1</label>
    </ligand>
</feature>
<feature type="binding site" evidence="1">
    <location>
        <position position="284"/>
    </location>
    <ligand>
        <name>Mg(2+)</name>
        <dbReference type="ChEBI" id="CHEBI:18420"/>
        <label>1</label>
    </ligand>
</feature>
<feature type="binding site" evidence="1">
    <location>
        <position position="284"/>
    </location>
    <ligand>
        <name>Mn(2+)</name>
        <dbReference type="ChEBI" id="CHEBI:29035"/>
        <label>1</label>
    </ligand>
</feature>
<feature type="binding site" evidence="1">
    <location>
        <position position="296"/>
    </location>
    <ligand>
        <name>ATP</name>
        <dbReference type="ChEBI" id="CHEBI:30616"/>
        <label>1</label>
    </ligand>
</feature>
<feature type="binding site" evidence="1">
    <location>
        <position position="296"/>
    </location>
    <ligand>
        <name>Mg(2+)</name>
        <dbReference type="ChEBI" id="CHEBI:18420"/>
        <label>1</label>
    </ligand>
</feature>
<feature type="binding site" evidence="1">
    <location>
        <position position="296"/>
    </location>
    <ligand>
        <name>Mg(2+)</name>
        <dbReference type="ChEBI" id="CHEBI:18420"/>
        <label>2</label>
    </ligand>
</feature>
<feature type="binding site" evidence="1">
    <location>
        <position position="296"/>
    </location>
    <ligand>
        <name>Mn(2+)</name>
        <dbReference type="ChEBI" id="CHEBI:29035"/>
        <label>1</label>
    </ligand>
</feature>
<feature type="binding site" evidence="1">
    <location>
        <position position="296"/>
    </location>
    <ligand>
        <name>Mn(2+)</name>
        <dbReference type="ChEBI" id="CHEBI:29035"/>
        <label>2</label>
    </ligand>
</feature>
<feature type="binding site" evidence="1">
    <location>
        <position position="298"/>
    </location>
    <ligand>
        <name>Mg(2+)</name>
        <dbReference type="ChEBI" id="CHEBI:18420"/>
        <label>2</label>
    </ligand>
</feature>
<feature type="binding site" evidence="1">
    <location>
        <position position="298"/>
    </location>
    <ligand>
        <name>Mn(2+)</name>
        <dbReference type="ChEBI" id="CHEBI:29035"/>
        <label>2</label>
    </ligand>
</feature>
<feature type="binding site" evidence="1">
    <location>
        <position position="709"/>
    </location>
    <ligand>
        <name>ATP</name>
        <dbReference type="ChEBI" id="CHEBI:30616"/>
        <label>2</label>
    </ligand>
</feature>
<feature type="binding site" evidence="1">
    <location>
        <position position="748"/>
    </location>
    <ligand>
        <name>ATP</name>
        <dbReference type="ChEBI" id="CHEBI:30616"/>
        <label>2</label>
    </ligand>
</feature>
<feature type="binding site" evidence="1">
    <location>
        <position position="750"/>
    </location>
    <ligand>
        <name>ATP</name>
        <dbReference type="ChEBI" id="CHEBI:30616"/>
        <label>2</label>
    </ligand>
</feature>
<feature type="binding site" evidence="1">
    <location>
        <position position="755"/>
    </location>
    <ligand>
        <name>ATP</name>
        <dbReference type="ChEBI" id="CHEBI:30616"/>
        <label>2</label>
    </ligand>
</feature>
<feature type="binding site" evidence="1">
    <location>
        <position position="780"/>
    </location>
    <ligand>
        <name>ATP</name>
        <dbReference type="ChEBI" id="CHEBI:30616"/>
        <label>2</label>
    </ligand>
</feature>
<feature type="binding site" evidence="1">
    <location>
        <position position="781"/>
    </location>
    <ligand>
        <name>ATP</name>
        <dbReference type="ChEBI" id="CHEBI:30616"/>
        <label>2</label>
    </ligand>
</feature>
<feature type="binding site" evidence="1">
    <location>
        <position position="782"/>
    </location>
    <ligand>
        <name>ATP</name>
        <dbReference type="ChEBI" id="CHEBI:30616"/>
        <label>2</label>
    </ligand>
</feature>
<feature type="binding site" evidence="1">
    <location>
        <position position="783"/>
    </location>
    <ligand>
        <name>ATP</name>
        <dbReference type="ChEBI" id="CHEBI:30616"/>
        <label>2</label>
    </ligand>
</feature>
<feature type="binding site" evidence="1">
    <location>
        <position position="823"/>
    </location>
    <ligand>
        <name>ATP</name>
        <dbReference type="ChEBI" id="CHEBI:30616"/>
        <label>2</label>
    </ligand>
</feature>
<feature type="binding site" evidence="1">
    <location>
        <position position="823"/>
    </location>
    <ligand>
        <name>Mg(2+)</name>
        <dbReference type="ChEBI" id="CHEBI:18420"/>
        <label>3</label>
    </ligand>
</feature>
<feature type="binding site" evidence="1">
    <location>
        <position position="823"/>
    </location>
    <ligand>
        <name>Mn(2+)</name>
        <dbReference type="ChEBI" id="CHEBI:29035"/>
        <label>3</label>
    </ligand>
</feature>
<feature type="binding site" evidence="1">
    <location>
        <position position="835"/>
    </location>
    <ligand>
        <name>ATP</name>
        <dbReference type="ChEBI" id="CHEBI:30616"/>
        <label>2</label>
    </ligand>
</feature>
<feature type="binding site" evidence="1">
    <location>
        <position position="835"/>
    </location>
    <ligand>
        <name>Mg(2+)</name>
        <dbReference type="ChEBI" id="CHEBI:18420"/>
        <label>3</label>
    </ligand>
</feature>
<feature type="binding site" evidence="1">
    <location>
        <position position="835"/>
    </location>
    <ligand>
        <name>Mg(2+)</name>
        <dbReference type="ChEBI" id="CHEBI:18420"/>
        <label>4</label>
    </ligand>
</feature>
<feature type="binding site" evidence="1">
    <location>
        <position position="835"/>
    </location>
    <ligand>
        <name>Mn(2+)</name>
        <dbReference type="ChEBI" id="CHEBI:29035"/>
        <label>3</label>
    </ligand>
</feature>
<feature type="binding site" evidence="1">
    <location>
        <position position="835"/>
    </location>
    <ligand>
        <name>Mn(2+)</name>
        <dbReference type="ChEBI" id="CHEBI:29035"/>
        <label>4</label>
    </ligand>
</feature>
<feature type="binding site" evidence="1">
    <location>
        <position position="837"/>
    </location>
    <ligand>
        <name>Mg(2+)</name>
        <dbReference type="ChEBI" id="CHEBI:18420"/>
        <label>4</label>
    </ligand>
</feature>
<feature type="binding site" evidence="1">
    <location>
        <position position="837"/>
    </location>
    <ligand>
        <name>Mn(2+)</name>
        <dbReference type="ChEBI" id="CHEBI:29035"/>
        <label>4</label>
    </ligand>
</feature>
<gene>
    <name evidence="1" type="primary">carB</name>
    <name type="ordered locus">Mbar_A2374</name>
</gene>
<dbReference type="EC" id="6.3.4.16" evidence="1"/>
<dbReference type="EC" id="6.3.5.5" evidence="1"/>
<dbReference type="EMBL" id="CP000099">
    <property type="protein sequence ID" value="AAZ71295.1"/>
    <property type="molecule type" value="Genomic_DNA"/>
</dbReference>
<dbReference type="SMR" id="Q469Z7"/>
<dbReference type="STRING" id="269797.Mbar_A2374"/>
<dbReference type="PaxDb" id="269797-Mbar_A2374"/>
<dbReference type="KEGG" id="mba:Mbar_A2374"/>
<dbReference type="eggNOG" id="arCOG01594">
    <property type="taxonomic scope" value="Archaea"/>
</dbReference>
<dbReference type="HOGENOM" id="CLU_000513_1_0_2"/>
<dbReference type="OrthoDB" id="85487at2157"/>
<dbReference type="UniPathway" id="UPA00068">
    <property type="reaction ID" value="UER00171"/>
</dbReference>
<dbReference type="UniPathway" id="UPA00070">
    <property type="reaction ID" value="UER00115"/>
</dbReference>
<dbReference type="GO" id="GO:0005737">
    <property type="term" value="C:cytoplasm"/>
    <property type="evidence" value="ECO:0007669"/>
    <property type="project" value="TreeGrafter"/>
</dbReference>
<dbReference type="GO" id="GO:0005524">
    <property type="term" value="F:ATP binding"/>
    <property type="evidence" value="ECO:0007669"/>
    <property type="project" value="UniProtKB-UniRule"/>
</dbReference>
<dbReference type="GO" id="GO:0004087">
    <property type="term" value="F:carbamoyl-phosphate synthase (ammonia) activity"/>
    <property type="evidence" value="ECO:0007669"/>
    <property type="project" value="RHEA"/>
</dbReference>
<dbReference type="GO" id="GO:0004088">
    <property type="term" value="F:carbamoyl-phosphate synthase (glutamine-hydrolyzing) activity"/>
    <property type="evidence" value="ECO:0007669"/>
    <property type="project" value="UniProtKB-UniRule"/>
</dbReference>
<dbReference type="GO" id="GO:0046872">
    <property type="term" value="F:metal ion binding"/>
    <property type="evidence" value="ECO:0007669"/>
    <property type="project" value="UniProtKB-KW"/>
</dbReference>
<dbReference type="GO" id="GO:0044205">
    <property type="term" value="P:'de novo' UMP biosynthetic process"/>
    <property type="evidence" value="ECO:0007669"/>
    <property type="project" value="UniProtKB-UniRule"/>
</dbReference>
<dbReference type="GO" id="GO:0006541">
    <property type="term" value="P:glutamine metabolic process"/>
    <property type="evidence" value="ECO:0007669"/>
    <property type="project" value="TreeGrafter"/>
</dbReference>
<dbReference type="GO" id="GO:0006526">
    <property type="term" value="P:L-arginine biosynthetic process"/>
    <property type="evidence" value="ECO:0007669"/>
    <property type="project" value="UniProtKB-UniRule"/>
</dbReference>
<dbReference type="CDD" id="cd01424">
    <property type="entry name" value="MGS_CPS_II"/>
    <property type="match status" value="1"/>
</dbReference>
<dbReference type="FunFam" id="1.10.1030.10:FF:000002">
    <property type="entry name" value="Carbamoyl-phosphate synthase large chain"/>
    <property type="match status" value="1"/>
</dbReference>
<dbReference type="FunFam" id="3.30.1490.20:FF:000001">
    <property type="entry name" value="Carbamoyl-phosphate synthase large chain"/>
    <property type="match status" value="1"/>
</dbReference>
<dbReference type="FunFam" id="3.30.470.20:FF:000001">
    <property type="entry name" value="Carbamoyl-phosphate synthase large chain"/>
    <property type="match status" value="1"/>
</dbReference>
<dbReference type="FunFam" id="3.30.470.20:FF:000013">
    <property type="entry name" value="Carbamoyl-phosphate synthase large chain"/>
    <property type="match status" value="1"/>
</dbReference>
<dbReference type="FunFam" id="3.40.50.20:FF:000001">
    <property type="entry name" value="Carbamoyl-phosphate synthase large chain"/>
    <property type="match status" value="2"/>
</dbReference>
<dbReference type="Gene3D" id="3.40.50.20">
    <property type="match status" value="2"/>
</dbReference>
<dbReference type="Gene3D" id="3.30.470.20">
    <property type="entry name" value="ATP-grasp fold, B domain"/>
    <property type="match status" value="2"/>
</dbReference>
<dbReference type="Gene3D" id="1.10.1030.10">
    <property type="entry name" value="Carbamoyl-phosphate synthetase, large subunit oligomerisation domain"/>
    <property type="match status" value="1"/>
</dbReference>
<dbReference type="Gene3D" id="3.40.50.1380">
    <property type="entry name" value="Methylglyoxal synthase-like domain"/>
    <property type="match status" value="1"/>
</dbReference>
<dbReference type="HAMAP" id="MF_01210_A">
    <property type="entry name" value="CPSase_L_chain_A"/>
    <property type="match status" value="1"/>
</dbReference>
<dbReference type="HAMAP" id="MF_01210_B">
    <property type="entry name" value="CPSase_L_chain_B"/>
    <property type="match status" value="1"/>
</dbReference>
<dbReference type="InterPro" id="IPR011761">
    <property type="entry name" value="ATP-grasp"/>
</dbReference>
<dbReference type="InterPro" id="IPR006275">
    <property type="entry name" value="CarbamoylP_synth_lsu"/>
</dbReference>
<dbReference type="InterPro" id="IPR005480">
    <property type="entry name" value="CarbamoylP_synth_lsu_oligo"/>
</dbReference>
<dbReference type="InterPro" id="IPR036897">
    <property type="entry name" value="CarbamoylP_synth_lsu_oligo_sf"/>
</dbReference>
<dbReference type="InterPro" id="IPR005479">
    <property type="entry name" value="CbamoylP_synth_lsu-like_ATP-bd"/>
</dbReference>
<dbReference type="InterPro" id="IPR005483">
    <property type="entry name" value="CbamoylP_synth_lsu_CPSase_dom"/>
</dbReference>
<dbReference type="InterPro" id="IPR011607">
    <property type="entry name" value="MGS-like_dom"/>
</dbReference>
<dbReference type="InterPro" id="IPR036914">
    <property type="entry name" value="MGS-like_dom_sf"/>
</dbReference>
<dbReference type="InterPro" id="IPR033937">
    <property type="entry name" value="MGS_CPS_CarB"/>
</dbReference>
<dbReference type="InterPro" id="IPR016185">
    <property type="entry name" value="PreATP-grasp_dom_sf"/>
</dbReference>
<dbReference type="NCBIfam" id="TIGR01369">
    <property type="entry name" value="CPSaseII_lrg"/>
    <property type="match status" value="1"/>
</dbReference>
<dbReference type="NCBIfam" id="NF003671">
    <property type="entry name" value="PRK05294.1"/>
    <property type="match status" value="1"/>
</dbReference>
<dbReference type="NCBIfam" id="NF009455">
    <property type="entry name" value="PRK12815.1"/>
    <property type="match status" value="1"/>
</dbReference>
<dbReference type="PANTHER" id="PTHR11405:SF53">
    <property type="entry name" value="CARBAMOYL-PHOSPHATE SYNTHASE [AMMONIA], MITOCHONDRIAL"/>
    <property type="match status" value="1"/>
</dbReference>
<dbReference type="PANTHER" id="PTHR11405">
    <property type="entry name" value="CARBAMOYLTRANSFERASE FAMILY MEMBER"/>
    <property type="match status" value="1"/>
</dbReference>
<dbReference type="Pfam" id="PF02786">
    <property type="entry name" value="CPSase_L_D2"/>
    <property type="match status" value="2"/>
</dbReference>
<dbReference type="Pfam" id="PF02787">
    <property type="entry name" value="CPSase_L_D3"/>
    <property type="match status" value="1"/>
</dbReference>
<dbReference type="Pfam" id="PF02142">
    <property type="entry name" value="MGS"/>
    <property type="match status" value="1"/>
</dbReference>
<dbReference type="PRINTS" id="PR00098">
    <property type="entry name" value="CPSASE"/>
</dbReference>
<dbReference type="SMART" id="SM01096">
    <property type="entry name" value="CPSase_L_D3"/>
    <property type="match status" value="1"/>
</dbReference>
<dbReference type="SMART" id="SM00851">
    <property type="entry name" value="MGS"/>
    <property type="match status" value="1"/>
</dbReference>
<dbReference type="SUPFAM" id="SSF48108">
    <property type="entry name" value="Carbamoyl phosphate synthetase, large subunit connection domain"/>
    <property type="match status" value="1"/>
</dbReference>
<dbReference type="SUPFAM" id="SSF56059">
    <property type="entry name" value="Glutathione synthetase ATP-binding domain-like"/>
    <property type="match status" value="2"/>
</dbReference>
<dbReference type="SUPFAM" id="SSF52335">
    <property type="entry name" value="Methylglyoxal synthase-like"/>
    <property type="match status" value="1"/>
</dbReference>
<dbReference type="SUPFAM" id="SSF52440">
    <property type="entry name" value="PreATP-grasp domain"/>
    <property type="match status" value="2"/>
</dbReference>
<dbReference type="PROSITE" id="PS50975">
    <property type="entry name" value="ATP_GRASP"/>
    <property type="match status" value="2"/>
</dbReference>
<dbReference type="PROSITE" id="PS00866">
    <property type="entry name" value="CPSASE_1"/>
    <property type="match status" value="1"/>
</dbReference>
<dbReference type="PROSITE" id="PS00867">
    <property type="entry name" value="CPSASE_2"/>
    <property type="match status" value="1"/>
</dbReference>
<dbReference type="PROSITE" id="PS51855">
    <property type="entry name" value="MGS"/>
    <property type="match status" value="1"/>
</dbReference>
<keyword id="KW-0028">Amino-acid biosynthesis</keyword>
<keyword id="KW-0055">Arginine biosynthesis</keyword>
<keyword id="KW-0067">ATP-binding</keyword>
<keyword id="KW-0436">Ligase</keyword>
<keyword id="KW-0460">Magnesium</keyword>
<keyword id="KW-0464">Manganese</keyword>
<keyword id="KW-0479">Metal-binding</keyword>
<keyword id="KW-0547">Nucleotide-binding</keyword>
<keyword id="KW-0665">Pyrimidine biosynthesis</keyword>
<keyword id="KW-0677">Repeat</keyword>
<reference key="1">
    <citation type="journal article" date="2006" name="J. Bacteriol.">
        <title>The Methanosarcina barkeri genome: comparative analysis with Methanosarcina acetivorans and Methanosarcina mazei reveals extensive rearrangement within methanosarcinal genomes.</title>
        <authorList>
            <person name="Maeder D.L."/>
            <person name="Anderson I."/>
            <person name="Brettin T.S."/>
            <person name="Bruce D.C."/>
            <person name="Gilna P."/>
            <person name="Han C.S."/>
            <person name="Lapidus A."/>
            <person name="Metcalf W.W."/>
            <person name="Saunders E."/>
            <person name="Tapia R."/>
            <person name="Sowers K.R."/>
        </authorList>
    </citation>
    <scope>NUCLEOTIDE SEQUENCE [LARGE SCALE GENOMIC DNA]</scope>
    <source>
        <strain>Fusaro / DSM 804</strain>
    </source>
</reference>
<proteinExistence type="inferred from homology"/>
<organism>
    <name type="scientific">Methanosarcina barkeri (strain Fusaro / DSM 804)</name>
    <dbReference type="NCBI Taxonomy" id="269797"/>
    <lineage>
        <taxon>Archaea</taxon>
        <taxon>Methanobacteriati</taxon>
        <taxon>Methanobacteriota</taxon>
        <taxon>Stenosarchaea group</taxon>
        <taxon>Methanomicrobia</taxon>
        <taxon>Methanosarcinales</taxon>
        <taxon>Methanosarcinaceae</taxon>
        <taxon>Methanosarcina</taxon>
    </lineage>
</organism>
<evidence type="ECO:0000255" key="1">
    <source>
        <dbReference type="HAMAP-Rule" id="MF_01210"/>
    </source>
</evidence>
<accession>Q469Z7</accession>
<sequence length="1071" mass="118345">MPKREDIKKVLLIGSGPITIGQAAEFDFSGSQACRSLKEEGIKVVLVNSNPATIMTDPEMADSVYIEPLDAKIVEKIIEKERPDGIIAGIGGQTGLNITSELAEKGVFEKYGVEILGTPVEAIKNTEDRELFKETMLRIGEKVPLSRAVNSLKEAEDVVDELGLPLIVRPAYTLGGAGGGIARTKEELLEITERGLRRSRINQVLIEESVLGWAEIEYEVMRDENDTCIVICNMENIDPMGVHTGESAVVAPSQTLSDAEHQMLRSASIKIIRALKIEGGCNIQYALKEGDYRVVEVNPRVSRSSALASKATGYPIARVTAKIAIGMKLDEIINNVTKSTPASFEPALDYVITKIPRWPFDKFTTADKTLTTAMKSTGEVMAIGRTIEESLLKAFKSLDIDNQLGNKHWDEPETKTLLKTPTSERLFVIFDALEKGMSVKEIFELSSINPFFISKIKRIVDMEKRIRAEELTPELLREAKKMGFPDTRLAELTGSTRQEISDLRHKAGILATFKMVDTCAAEFEAATPYYYSTYEDSCETNATTDKKKILILGAGPIRIGQGIEFDYCTVHAVTALREEGIETHIINNNPETVSTDFDTSDKLFFEPLTLEYVMNVIEREKPDGVLVQFGGQTSVNLAIPLKQELKRRTDLNTVILGTDPDDMDLAEDREKFYILMKELGVPQPEGGYATSHKEAIEVAKRIGFPVLVRPSYVLGGRAMEIVYDEIDLERYMKEAVRVSHEHPILIDDFLEAASEIDVDAVCDQKDVIIGAIMEHIEEAGVHSGDSACVIPPQSLSPEVLDQVRDYTRKIALALKVKGLINIQMAEKCGKVYVLEANPRSSRTIPFVSKSVGIPLAKIAAKVIAGHSLKSLGYTDEPKPKHVSIKEVLLPFDKLPGADPVLGPEMKSTGEVMGIDYDFGRAYYKAELAADNVLPLTGKVFLSIRNADKTELVDVAKKLQAAGLELMGTEGTVNYLARHGVFMDVVKKVHDGSPNVIDMMRRDEVDLIINTPTSKQSRRDGSRIRRAAVDFKVPYITTMQAAIAAAAAIETMKKGEELTIKSINEYHKEMEN</sequence>
<protein>
    <recommendedName>
        <fullName evidence="1">Carbamoyl phosphate synthase large chain</fullName>
        <ecNumber evidence="1">6.3.4.16</ecNumber>
        <ecNumber evidence="1">6.3.5.5</ecNumber>
    </recommendedName>
    <alternativeName>
        <fullName evidence="1">Carbamoyl phosphate synthetase ammonia chain</fullName>
    </alternativeName>
</protein>